<dbReference type="EC" id="3.4.24.-"/>
<dbReference type="EMBL" id="AY835996">
    <property type="protein sequence ID" value="AAX38181.1"/>
    <property type="molecule type" value="mRNA"/>
</dbReference>
<dbReference type="SMR" id="Q4VM08"/>
<dbReference type="MEROPS" id="M12.315"/>
<dbReference type="GO" id="GO:0005576">
    <property type="term" value="C:extracellular region"/>
    <property type="evidence" value="ECO:0007669"/>
    <property type="project" value="UniProtKB-SubCell"/>
</dbReference>
<dbReference type="GO" id="GO:0005886">
    <property type="term" value="C:plasma membrane"/>
    <property type="evidence" value="ECO:0007669"/>
    <property type="project" value="TreeGrafter"/>
</dbReference>
<dbReference type="GO" id="GO:0046872">
    <property type="term" value="F:metal ion binding"/>
    <property type="evidence" value="ECO:0007669"/>
    <property type="project" value="UniProtKB-KW"/>
</dbReference>
<dbReference type="GO" id="GO:0004222">
    <property type="term" value="F:metalloendopeptidase activity"/>
    <property type="evidence" value="ECO:0007669"/>
    <property type="project" value="InterPro"/>
</dbReference>
<dbReference type="GO" id="GO:0090729">
    <property type="term" value="F:toxin activity"/>
    <property type="evidence" value="ECO:0007669"/>
    <property type="project" value="UniProtKB-KW"/>
</dbReference>
<dbReference type="GO" id="GO:0006915">
    <property type="term" value="P:apoptotic process"/>
    <property type="evidence" value="ECO:0007669"/>
    <property type="project" value="UniProtKB-KW"/>
</dbReference>
<dbReference type="GO" id="GO:0006508">
    <property type="term" value="P:proteolysis"/>
    <property type="evidence" value="ECO:0007669"/>
    <property type="project" value="UniProtKB-KW"/>
</dbReference>
<dbReference type="CDD" id="cd04269">
    <property type="entry name" value="ZnMc_adamalysin_II_like"/>
    <property type="match status" value="1"/>
</dbReference>
<dbReference type="FunFam" id="3.40.390.10:FF:000002">
    <property type="entry name" value="Disintegrin and metalloproteinase domain-containing protein 22"/>
    <property type="match status" value="1"/>
</dbReference>
<dbReference type="FunFam" id="4.10.70.10:FF:000001">
    <property type="entry name" value="Disintegrin and metalloproteinase domain-containing protein 22"/>
    <property type="match status" value="1"/>
</dbReference>
<dbReference type="Gene3D" id="3.40.390.10">
    <property type="entry name" value="Collagenase (Catalytic Domain)"/>
    <property type="match status" value="1"/>
</dbReference>
<dbReference type="Gene3D" id="4.10.70.10">
    <property type="entry name" value="Disintegrin domain"/>
    <property type="match status" value="1"/>
</dbReference>
<dbReference type="InterPro" id="IPR006586">
    <property type="entry name" value="ADAM_Cys-rich"/>
</dbReference>
<dbReference type="InterPro" id="IPR018358">
    <property type="entry name" value="Disintegrin_CS"/>
</dbReference>
<dbReference type="InterPro" id="IPR001762">
    <property type="entry name" value="Disintegrin_dom"/>
</dbReference>
<dbReference type="InterPro" id="IPR036436">
    <property type="entry name" value="Disintegrin_dom_sf"/>
</dbReference>
<dbReference type="InterPro" id="IPR024079">
    <property type="entry name" value="MetalloPept_cat_dom_sf"/>
</dbReference>
<dbReference type="InterPro" id="IPR001590">
    <property type="entry name" value="Peptidase_M12B"/>
</dbReference>
<dbReference type="InterPro" id="IPR002870">
    <property type="entry name" value="Peptidase_M12B_N"/>
</dbReference>
<dbReference type="InterPro" id="IPR034027">
    <property type="entry name" value="Reprolysin_adamalysin"/>
</dbReference>
<dbReference type="PANTHER" id="PTHR11905">
    <property type="entry name" value="ADAM A DISINTEGRIN AND METALLOPROTEASE DOMAIN"/>
    <property type="match status" value="1"/>
</dbReference>
<dbReference type="PANTHER" id="PTHR11905:SF32">
    <property type="entry name" value="DISINTEGRIN AND METALLOPROTEINASE DOMAIN-CONTAINING PROTEIN 28"/>
    <property type="match status" value="1"/>
</dbReference>
<dbReference type="Pfam" id="PF08516">
    <property type="entry name" value="ADAM_CR"/>
    <property type="match status" value="1"/>
</dbReference>
<dbReference type="Pfam" id="PF00200">
    <property type="entry name" value="Disintegrin"/>
    <property type="match status" value="1"/>
</dbReference>
<dbReference type="Pfam" id="PF01562">
    <property type="entry name" value="Pep_M12B_propep"/>
    <property type="match status" value="1"/>
</dbReference>
<dbReference type="Pfam" id="PF01421">
    <property type="entry name" value="Reprolysin"/>
    <property type="match status" value="1"/>
</dbReference>
<dbReference type="PRINTS" id="PR00289">
    <property type="entry name" value="DISINTEGRIN"/>
</dbReference>
<dbReference type="SMART" id="SM00608">
    <property type="entry name" value="ACR"/>
    <property type="match status" value="1"/>
</dbReference>
<dbReference type="SMART" id="SM00050">
    <property type="entry name" value="DISIN"/>
    <property type="match status" value="1"/>
</dbReference>
<dbReference type="SUPFAM" id="SSF57552">
    <property type="entry name" value="Blood coagulation inhibitor (disintegrin)"/>
    <property type="match status" value="1"/>
</dbReference>
<dbReference type="SUPFAM" id="SSF55486">
    <property type="entry name" value="Metalloproteases ('zincins'), catalytic domain"/>
    <property type="match status" value="1"/>
</dbReference>
<dbReference type="PROSITE" id="PS50215">
    <property type="entry name" value="ADAM_MEPRO"/>
    <property type="match status" value="1"/>
</dbReference>
<dbReference type="PROSITE" id="PS00427">
    <property type="entry name" value="DISINTEGRIN_1"/>
    <property type="match status" value="1"/>
</dbReference>
<dbReference type="PROSITE" id="PS50214">
    <property type="entry name" value="DISINTEGRIN_2"/>
    <property type="match status" value="1"/>
</dbReference>
<dbReference type="PROSITE" id="PS00142">
    <property type="entry name" value="ZINC_PROTEASE"/>
    <property type="match status" value="1"/>
</dbReference>
<comment type="function">
    <text evidence="6">Snake venom zinc metalloprotease that hydrolyzes the alpha-chain (FGA) and more slowly the beta-chain (FGB) of fibrinogen, without affecting the gamma-chain. Cleaves alpha-chain of fibrinogen at '432-Lys-|-Leu-433' and '535-Pro-|-Met-536' bonds. Induces apoptosis in vascular endothelial cells and inhibits endothelial cell adhesion to extracellular matrix proteins such as fibrinogen, fibronectin, vitronectin, collagen I, and collagen IV. Also hydrolyzes azocasein, and insulin B-chain (at the '38-Ala-|-Leu-39' bond).</text>
</comment>
<comment type="cofactor">
    <cofactor evidence="1">
        <name>Zn(2+)</name>
        <dbReference type="ChEBI" id="CHEBI:29105"/>
    </cofactor>
    <text evidence="1">Binds 1 zinc ion per subunit.</text>
</comment>
<comment type="activity regulation">
    <text evidence="6">Inhibited by EDTA or 1,10-phenanthroline. Not inhibited by PMSF.</text>
</comment>
<comment type="subunit">
    <text evidence="6">Heterodimer; disulfide-linked.</text>
</comment>
<comment type="subcellular location">
    <subcellularLocation>
        <location evidence="1">Secreted</location>
    </subcellularLocation>
</comment>
<comment type="tissue specificity">
    <text>Expressed by the venom gland.</text>
</comment>
<comment type="PTM">
    <text evidence="6">The N-terminus is blocked.</text>
</comment>
<comment type="miscellaneous">
    <text evidence="8">Negative results: does not cleave fibrin.</text>
</comment>
<comment type="similarity">
    <text evidence="7">Belongs to the venom metalloproteinase (M12B) family. P-III subfamily. P-IIIc sub-subfamily.</text>
</comment>
<evidence type="ECO:0000250" key="1"/>
<evidence type="ECO:0000255" key="2"/>
<evidence type="ECO:0000255" key="3">
    <source>
        <dbReference type="PROSITE-ProRule" id="PRU00068"/>
    </source>
</evidence>
<evidence type="ECO:0000255" key="4">
    <source>
        <dbReference type="PROSITE-ProRule" id="PRU00276"/>
    </source>
</evidence>
<evidence type="ECO:0000255" key="5">
    <source>
        <dbReference type="PROSITE-ProRule" id="PRU10095"/>
    </source>
</evidence>
<evidence type="ECO:0000269" key="6">
    <source>
    </source>
</evidence>
<evidence type="ECO:0000305" key="7"/>
<evidence type="ECO:0000305" key="8">
    <source>
    </source>
</evidence>
<reference key="1">
    <citation type="journal article" date="2005" name="Toxicon">
        <title>A novel metalloprotease from Vipera lebetina venom induces human endothelial cell apoptosis.</title>
        <authorList>
            <person name="Trummal K."/>
            <person name="Tonismagi K."/>
            <person name="Siigur E."/>
            <person name="Aaspollu A."/>
            <person name="Lopp A."/>
            <person name="Sillat T."/>
            <person name="Saat R."/>
            <person name="Kasak L."/>
            <person name="Tammiste I."/>
            <person name="Kogerman P."/>
            <person name="Kalkkinen N."/>
            <person name="Siigur J."/>
        </authorList>
    </citation>
    <scope>NUCLEOTIDE SEQUENCE [MRNA]</scope>
    <scope>PROTEIN SEQUENCE OF 198-203; 270-277; 362-374; 391-401; 441-457; 461-492; 552-560; 575-596 AND 608-616</scope>
    <scope>PYROGLUTAMATE FORMATION AT GLN-195</scope>
    <scope>FUNCTION</scope>
    <scope>CATALYTIC ACTIVITY</scope>
    <scope>ACTIVITY REGULATION</scope>
    <scope>SUBUNIT</scope>
    <source>
        <tissue>Venom</tissue>
        <tissue>Venom gland</tissue>
    </source>
</reference>
<protein>
    <recommendedName>
        <fullName>Zinc metalloproteinase-disintegrin-like VLAIP-A</fullName>
        <ecNumber>3.4.24.-</ecNumber>
    </recommendedName>
    <alternativeName>
        <fullName>Snake venom metalloproteinase</fullName>
        <shortName>SVMP</shortName>
    </alternativeName>
    <alternativeName>
        <fullName>Vipera lebetina apoptosis-inducing protein</fullName>
    </alternativeName>
</protein>
<accession>Q4VM08</accession>
<feature type="signal peptide" evidence="2">
    <location>
        <begin position="1"/>
        <end position="20"/>
    </location>
</feature>
<feature type="propeptide" id="PRO_0000340312" evidence="1">
    <location>
        <begin position="21"/>
        <end position="194"/>
    </location>
</feature>
<feature type="chain" id="PRO_0000340313" description="Zinc metalloproteinase-disintegrin-like VLAIP-A">
    <location>
        <begin position="195"/>
        <end position="616"/>
    </location>
</feature>
<feature type="domain" description="Peptidase M12B" evidence="4">
    <location>
        <begin position="203"/>
        <end position="399"/>
    </location>
</feature>
<feature type="domain" description="Disintegrin" evidence="3">
    <location>
        <begin position="407"/>
        <end position="493"/>
    </location>
</feature>
<feature type="short sequence motif" description="D/ECD-tripeptide">
    <location>
        <begin position="471"/>
        <end position="473"/>
    </location>
</feature>
<feature type="active site" evidence="4 5">
    <location>
        <position position="340"/>
    </location>
</feature>
<feature type="binding site" evidence="1">
    <location>
        <position position="339"/>
    </location>
    <ligand>
        <name>Zn(2+)</name>
        <dbReference type="ChEBI" id="CHEBI:29105"/>
        <note>catalytic</note>
    </ligand>
</feature>
<feature type="binding site" evidence="1">
    <location>
        <position position="343"/>
    </location>
    <ligand>
        <name>Zn(2+)</name>
        <dbReference type="ChEBI" id="CHEBI:29105"/>
        <note>catalytic</note>
    </ligand>
</feature>
<feature type="binding site" evidence="1">
    <location>
        <position position="349"/>
    </location>
    <ligand>
        <name>Zn(2+)</name>
        <dbReference type="ChEBI" id="CHEBI:29105"/>
        <note>catalytic</note>
    </ligand>
</feature>
<feature type="binding site" evidence="1">
    <location>
        <position position="409"/>
    </location>
    <ligand>
        <name>Ca(2+)</name>
        <dbReference type="ChEBI" id="CHEBI:29108"/>
    </ligand>
</feature>
<feature type="binding site" evidence="1">
    <location>
        <position position="412"/>
    </location>
    <ligand>
        <name>Ca(2+)</name>
        <dbReference type="ChEBI" id="CHEBI:29108"/>
    </ligand>
</feature>
<feature type="binding site" evidence="1">
    <location>
        <position position="414"/>
    </location>
    <ligand>
        <name>Ca(2+)</name>
        <dbReference type="ChEBI" id="CHEBI:29108"/>
    </ligand>
</feature>
<feature type="binding site" evidence="1">
    <location>
        <position position="416"/>
    </location>
    <ligand>
        <name>Ca(2+)</name>
        <dbReference type="ChEBI" id="CHEBI:29108"/>
    </ligand>
</feature>
<feature type="binding site" evidence="1">
    <location>
        <position position="419"/>
    </location>
    <ligand>
        <name>Ca(2+)</name>
        <dbReference type="ChEBI" id="CHEBI:29108"/>
    </ligand>
</feature>
<feature type="binding site" evidence="1">
    <location>
        <position position="422"/>
    </location>
    <ligand>
        <name>Ca(2+)</name>
        <dbReference type="ChEBI" id="CHEBI:29108"/>
    </ligand>
</feature>
<feature type="modified residue" description="Pyrrolidone carboxylic acid" evidence="8">
    <location>
        <position position="195"/>
    </location>
</feature>
<feature type="glycosylation site" description="N-linked (GlcNAc...) asparagine" evidence="2">
    <location>
        <position position="377"/>
    </location>
</feature>
<feature type="disulfide bond" evidence="1">
    <location>
        <begin position="314"/>
        <end position="394"/>
    </location>
</feature>
<feature type="disulfide bond" evidence="1">
    <location>
        <begin position="354"/>
        <end position="378"/>
    </location>
</feature>
<feature type="disulfide bond" evidence="1">
    <location>
        <begin position="356"/>
        <end position="361"/>
    </location>
</feature>
<feature type="disulfide bond" description="Interchain (with C-368 in VLAIP-B)" evidence="3 4">
    <location>
        <position position="369"/>
    </location>
</feature>
<feature type="disulfide bond" evidence="1">
    <location>
        <begin position="410"/>
        <end position="439"/>
    </location>
</feature>
<feature type="disulfide bond" evidence="1">
    <location>
        <begin position="421"/>
        <end position="434"/>
    </location>
</feature>
<feature type="disulfide bond" evidence="1">
    <location>
        <begin position="423"/>
        <end position="429"/>
    </location>
</feature>
<feature type="disulfide bond" evidence="1">
    <location>
        <begin position="433"/>
        <end position="456"/>
    </location>
</feature>
<feature type="disulfide bond" evidence="1">
    <location>
        <begin position="447"/>
        <end position="453"/>
    </location>
</feature>
<feature type="disulfide bond" evidence="1">
    <location>
        <begin position="452"/>
        <end position="478"/>
    </location>
</feature>
<feature type="disulfide bond" evidence="1">
    <location>
        <begin position="465"/>
        <end position="485"/>
    </location>
</feature>
<feature type="disulfide bond" evidence="1">
    <location>
        <begin position="472"/>
        <end position="504"/>
    </location>
</feature>
<feature type="disulfide bond" evidence="1">
    <location>
        <begin position="497"/>
        <end position="509"/>
    </location>
</feature>
<feature type="disulfide bond" evidence="1">
    <location>
        <begin position="516"/>
        <end position="566"/>
    </location>
</feature>
<feature type="disulfide bond" evidence="1">
    <location>
        <begin position="531"/>
        <end position="577"/>
    </location>
</feature>
<feature type="disulfide bond" evidence="1">
    <location>
        <begin position="544"/>
        <end position="554"/>
    </location>
</feature>
<feature type="disulfide bond" evidence="1">
    <location>
        <begin position="561"/>
        <end position="603"/>
    </location>
</feature>
<feature type="disulfide bond" evidence="1">
    <location>
        <begin position="597"/>
        <end position="609"/>
    </location>
</feature>
<proteinExistence type="evidence at protein level"/>
<organism>
    <name type="scientific">Macrovipera lebetinus</name>
    <name type="common">Levantine viper</name>
    <name type="synonym">Vipera lebetina</name>
    <dbReference type="NCBI Taxonomy" id="3148341"/>
    <lineage>
        <taxon>Eukaryota</taxon>
        <taxon>Metazoa</taxon>
        <taxon>Chordata</taxon>
        <taxon>Craniata</taxon>
        <taxon>Vertebrata</taxon>
        <taxon>Euteleostomi</taxon>
        <taxon>Lepidosauria</taxon>
        <taxon>Squamata</taxon>
        <taxon>Bifurcata</taxon>
        <taxon>Unidentata</taxon>
        <taxon>Episquamata</taxon>
        <taxon>Toxicofera</taxon>
        <taxon>Serpentes</taxon>
        <taxon>Colubroidea</taxon>
        <taxon>Viperidae</taxon>
        <taxon>Viperinae</taxon>
        <taxon>Macrovipera</taxon>
    </lineage>
</organism>
<name>VM3VA_MACLB</name>
<keyword id="KW-0053">Apoptosis</keyword>
<keyword id="KW-0106">Calcium</keyword>
<keyword id="KW-1217">Cell adhesion impairing toxin</keyword>
<keyword id="KW-0903">Direct protein sequencing</keyword>
<keyword id="KW-1015">Disulfide bond</keyword>
<keyword id="KW-1206">Fibrinogenolytic toxin</keyword>
<keyword id="KW-0325">Glycoprotein</keyword>
<keyword id="KW-1199">Hemostasis impairing toxin</keyword>
<keyword id="KW-0378">Hydrolase</keyword>
<keyword id="KW-0479">Metal-binding</keyword>
<keyword id="KW-0482">Metalloprotease</keyword>
<keyword id="KW-0645">Protease</keyword>
<keyword id="KW-0873">Pyrrolidone carboxylic acid</keyword>
<keyword id="KW-0964">Secreted</keyword>
<keyword id="KW-0732">Signal</keyword>
<keyword id="KW-0800">Toxin</keyword>
<keyword id="KW-0862">Zinc</keyword>
<keyword id="KW-0865">Zymogen</keyword>
<sequence>MMQVLLVTISLAVFPYQGSSIILESGNVNDYEVVYPQKVTAMPKGAVKQPEQKYEDAMQYEFKVKGEPVVLLLEKNKDLFSEDYSETHYSPDGREITTNPPVEDHCYYHGRIQNDADSSASISACNGLKGHFMLQGETYLIEPLKLPDSEAHAVYKYENVEKEDEAPKMCGVTQTNWESDEPIKKASQLNLTPEQRRYLNSPKYIKLVIVADYIMFLKYGRSLITIRTRIYEIVNILNVIYRVLNIYIALLGLEIWNNGDKINVLPETKVTLDLFGKWRERDLLNRRKHDNAQLLTDINFNGPTAGLGYVGSMCDPQYSAGIVQDHNKVNFLVALAMAHEMGHNLGMEHDEIHCTCGAKSCIMSGTLSCEASIRFSNCSREEHQKYLINKMPQCILNKPLKTDIVSPAVCGNYLVELGEDCDCGSPRDCQNPCCNAATCKLTPGSQCADGECCDQCKFRRAGTVCRPANGECDVSDLCTGQSAECPTDQFQRNGQPCQNNNGYCYSGTCPIMGKQCISLFGASATVAQDACFQFNSLGNEYGYCRKENGRKIPCAPQDVKCGRLYCFDNLPEHKNPCQIYYTPSDENKGMVDPGTKCGDGKACSSNRQCVDVNTAY</sequence>